<evidence type="ECO:0000255" key="1">
    <source>
        <dbReference type="HAMAP-Rule" id="MF_00006"/>
    </source>
</evidence>
<feature type="chain" id="PRO_0000240714" description="Argininosuccinate lyase">
    <location>
        <begin position="1"/>
        <end position="459"/>
    </location>
</feature>
<dbReference type="EC" id="4.3.2.1" evidence="1"/>
<dbReference type="EMBL" id="AE017333">
    <property type="protein sequence ID" value="AAU41946.1"/>
    <property type="molecule type" value="Genomic_DNA"/>
</dbReference>
<dbReference type="EMBL" id="CP000002">
    <property type="protein sequence ID" value="AAU24588.1"/>
    <property type="molecule type" value="Genomic_DNA"/>
</dbReference>
<dbReference type="RefSeq" id="WP_009329372.1">
    <property type="nucleotide sequence ID" value="NC_006322.1"/>
</dbReference>
<dbReference type="SMR" id="Q65G68"/>
<dbReference type="STRING" id="279010.BL00416"/>
<dbReference type="GeneID" id="92860325"/>
<dbReference type="KEGG" id="bld:BLi03083"/>
<dbReference type="KEGG" id="bli:BL00416"/>
<dbReference type="PATRIC" id="fig|279010.13.peg.3149"/>
<dbReference type="eggNOG" id="COG0165">
    <property type="taxonomic scope" value="Bacteria"/>
</dbReference>
<dbReference type="HOGENOM" id="CLU_027272_2_3_9"/>
<dbReference type="UniPathway" id="UPA00068">
    <property type="reaction ID" value="UER00114"/>
</dbReference>
<dbReference type="Proteomes" id="UP000000606">
    <property type="component" value="Chromosome"/>
</dbReference>
<dbReference type="GO" id="GO:0005829">
    <property type="term" value="C:cytosol"/>
    <property type="evidence" value="ECO:0007669"/>
    <property type="project" value="TreeGrafter"/>
</dbReference>
<dbReference type="GO" id="GO:0004056">
    <property type="term" value="F:argininosuccinate lyase activity"/>
    <property type="evidence" value="ECO:0007669"/>
    <property type="project" value="UniProtKB-UniRule"/>
</dbReference>
<dbReference type="GO" id="GO:0042450">
    <property type="term" value="P:arginine biosynthetic process via ornithine"/>
    <property type="evidence" value="ECO:0007669"/>
    <property type="project" value="InterPro"/>
</dbReference>
<dbReference type="GO" id="GO:0006526">
    <property type="term" value="P:L-arginine biosynthetic process"/>
    <property type="evidence" value="ECO:0007669"/>
    <property type="project" value="UniProtKB-UniRule"/>
</dbReference>
<dbReference type="CDD" id="cd01359">
    <property type="entry name" value="Argininosuccinate_lyase"/>
    <property type="match status" value="1"/>
</dbReference>
<dbReference type="FunFam" id="1.10.275.10:FF:000002">
    <property type="entry name" value="Argininosuccinate lyase"/>
    <property type="match status" value="1"/>
</dbReference>
<dbReference type="FunFam" id="1.10.40.30:FF:000001">
    <property type="entry name" value="Argininosuccinate lyase"/>
    <property type="match status" value="1"/>
</dbReference>
<dbReference type="FunFam" id="1.20.200.10:FF:000002">
    <property type="entry name" value="Argininosuccinate lyase"/>
    <property type="match status" value="1"/>
</dbReference>
<dbReference type="Gene3D" id="1.10.40.30">
    <property type="entry name" value="Fumarase/aspartase (C-terminal domain)"/>
    <property type="match status" value="1"/>
</dbReference>
<dbReference type="Gene3D" id="1.20.200.10">
    <property type="entry name" value="Fumarase/aspartase (Central domain)"/>
    <property type="match status" value="1"/>
</dbReference>
<dbReference type="Gene3D" id="1.10.275.10">
    <property type="entry name" value="Fumarase/aspartase (N-terminal domain)"/>
    <property type="match status" value="1"/>
</dbReference>
<dbReference type="HAMAP" id="MF_00006">
    <property type="entry name" value="Arg_succ_lyase"/>
    <property type="match status" value="1"/>
</dbReference>
<dbReference type="InterPro" id="IPR029419">
    <property type="entry name" value="Arg_succ_lyase_C"/>
</dbReference>
<dbReference type="InterPro" id="IPR009049">
    <property type="entry name" value="Argininosuccinate_lyase"/>
</dbReference>
<dbReference type="InterPro" id="IPR024083">
    <property type="entry name" value="Fumarase/histidase_N"/>
</dbReference>
<dbReference type="InterPro" id="IPR020557">
    <property type="entry name" value="Fumarate_lyase_CS"/>
</dbReference>
<dbReference type="InterPro" id="IPR000362">
    <property type="entry name" value="Fumarate_lyase_fam"/>
</dbReference>
<dbReference type="InterPro" id="IPR022761">
    <property type="entry name" value="Fumarate_lyase_N"/>
</dbReference>
<dbReference type="InterPro" id="IPR008948">
    <property type="entry name" value="L-Aspartase-like"/>
</dbReference>
<dbReference type="NCBIfam" id="TIGR00838">
    <property type="entry name" value="argH"/>
    <property type="match status" value="1"/>
</dbReference>
<dbReference type="PANTHER" id="PTHR43814">
    <property type="entry name" value="ARGININOSUCCINATE LYASE"/>
    <property type="match status" value="1"/>
</dbReference>
<dbReference type="PANTHER" id="PTHR43814:SF1">
    <property type="entry name" value="ARGININOSUCCINATE LYASE"/>
    <property type="match status" value="1"/>
</dbReference>
<dbReference type="Pfam" id="PF14698">
    <property type="entry name" value="ASL_C2"/>
    <property type="match status" value="1"/>
</dbReference>
<dbReference type="Pfam" id="PF00206">
    <property type="entry name" value="Lyase_1"/>
    <property type="match status" value="1"/>
</dbReference>
<dbReference type="PRINTS" id="PR00145">
    <property type="entry name" value="ARGSUCLYASE"/>
</dbReference>
<dbReference type="PRINTS" id="PR00149">
    <property type="entry name" value="FUMRATELYASE"/>
</dbReference>
<dbReference type="SUPFAM" id="SSF48557">
    <property type="entry name" value="L-aspartase-like"/>
    <property type="match status" value="1"/>
</dbReference>
<dbReference type="PROSITE" id="PS00163">
    <property type="entry name" value="FUMARATE_LYASES"/>
    <property type="match status" value="1"/>
</dbReference>
<keyword id="KW-0028">Amino-acid biosynthesis</keyword>
<keyword id="KW-0055">Arginine biosynthesis</keyword>
<keyword id="KW-0963">Cytoplasm</keyword>
<keyword id="KW-0456">Lyase</keyword>
<keyword id="KW-1185">Reference proteome</keyword>
<reference key="1">
    <citation type="journal article" date="2004" name="J. Mol. Microbiol. Biotechnol.">
        <title>The complete genome sequence of Bacillus licheniformis DSM13, an organism with great industrial potential.</title>
        <authorList>
            <person name="Veith B."/>
            <person name="Herzberg C."/>
            <person name="Steckel S."/>
            <person name="Feesche J."/>
            <person name="Maurer K.H."/>
            <person name="Ehrenreich P."/>
            <person name="Baeumer S."/>
            <person name="Henne A."/>
            <person name="Liesegang H."/>
            <person name="Merkl R."/>
            <person name="Ehrenreich A."/>
            <person name="Gottschalk G."/>
        </authorList>
    </citation>
    <scope>NUCLEOTIDE SEQUENCE [LARGE SCALE GENOMIC DNA]</scope>
    <source>
        <strain>ATCC 14580 / DSM 13 / JCM 2505 / CCUG 7422 / NBRC 12200 / NCIMB 9375 / NCTC 10341 / NRRL NRS-1264 / Gibson 46</strain>
    </source>
</reference>
<reference key="2">
    <citation type="journal article" date="2004" name="Genome Biol.">
        <title>Complete genome sequence of the industrial bacterium Bacillus licheniformis and comparisons with closely related Bacillus species.</title>
        <authorList>
            <person name="Rey M.W."/>
            <person name="Ramaiya P."/>
            <person name="Nelson B.A."/>
            <person name="Brody-Karpin S.D."/>
            <person name="Zaretsky E.J."/>
            <person name="Tang M."/>
            <person name="Lopez de Leon A."/>
            <person name="Xiang H."/>
            <person name="Gusti V."/>
            <person name="Clausen I.G."/>
            <person name="Olsen P.B."/>
            <person name="Rasmussen M.D."/>
            <person name="Andersen J.T."/>
            <person name="Joergensen P.L."/>
            <person name="Larsen T.S."/>
            <person name="Sorokin A."/>
            <person name="Bolotin A."/>
            <person name="Lapidus A."/>
            <person name="Galleron N."/>
            <person name="Ehrlich S.D."/>
            <person name="Berka R.M."/>
        </authorList>
    </citation>
    <scope>NUCLEOTIDE SEQUENCE [LARGE SCALE GENOMIC DNA]</scope>
    <source>
        <strain>ATCC 14580 / DSM 13 / JCM 2505 / CCUG 7422 / NBRC 12200 / NCIMB 9375 / NCTC 10341 / NRRL NRS-1264 / Gibson 46</strain>
    </source>
</reference>
<comment type="catalytic activity">
    <reaction evidence="1">
        <text>2-(N(omega)-L-arginino)succinate = fumarate + L-arginine</text>
        <dbReference type="Rhea" id="RHEA:24020"/>
        <dbReference type="ChEBI" id="CHEBI:29806"/>
        <dbReference type="ChEBI" id="CHEBI:32682"/>
        <dbReference type="ChEBI" id="CHEBI:57472"/>
        <dbReference type="EC" id="4.3.2.1"/>
    </reaction>
</comment>
<comment type="pathway">
    <text evidence="1">Amino-acid biosynthesis; L-arginine biosynthesis; L-arginine from L-ornithine and carbamoyl phosphate: step 3/3.</text>
</comment>
<comment type="subcellular location">
    <subcellularLocation>
        <location evidence="1">Cytoplasm</location>
    </subcellularLocation>
</comment>
<comment type="similarity">
    <text evidence="1">Belongs to the lyase 1 family. Argininosuccinate lyase subfamily.</text>
</comment>
<protein>
    <recommendedName>
        <fullName evidence="1">Argininosuccinate lyase</fullName>
        <shortName evidence="1">ASAL</shortName>
        <ecNumber evidence="1">4.3.2.1</ecNumber>
    </recommendedName>
    <alternativeName>
        <fullName evidence="1">Arginosuccinase</fullName>
    </alternativeName>
</protein>
<sequence>MKKLWGGRFQKTPEKWVDEFGASIHFDKTLVKEDIAGSLAHASMLEKCGILTEAEAVKIKEGLTSLLHKAEKNELDFSVDCEDIHLNLEKMLIDEIGPLGGKLHTARSRNDQVATDMHLYLKGHTEHIIELITAFQHVLIEKAEEHVETILPGYTHLQRAQPISFAHHLLAYFWMLERDKERYHDSFKRINKSPLGCGALAGTTFPIDREYSADLLGFDSIYENSLDGVSDRDFILEFLSASSILMMHLSRFSEEIILWCSQEFKFIELDDTYATGSSMMPQKKNPDMAELIRGKTGRVYGDLIGLLTIMKGLPLAYNKDLQEDKEGMFDTVKTVEGSLEIFAGMIKTMTVNKNMMKKATEQDFSNATELADYLAKKGMPFREAHEVVGRLVFTCIEKGIYLSGLPFEEFKKASGLFEEDVYIVLDPHHAVEKRMSEGGTGFKKVTEAIQKAKQCLNNF</sequence>
<proteinExistence type="inferred from homology"/>
<name>ARLY_BACLD</name>
<organism>
    <name type="scientific">Bacillus licheniformis (strain ATCC 14580 / DSM 13 / JCM 2505 / CCUG 7422 / NBRC 12200 / NCIMB 9375 / NCTC 10341 / NRRL NRS-1264 / Gibson 46)</name>
    <dbReference type="NCBI Taxonomy" id="279010"/>
    <lineage>
        <taxon>Bacteria</taxon>
        <taxon>Bacillati</taxon>
        <taxon>Bacillota</taxon>
        <taxon>Bacilli</taxon>
        <taxon>Bacillales</taxon>
        <taxon>Bacillaceae</taxon>
        <taxon>Bacillus</taxon>
    </lineage>
</organism>
<gene>
    <name evidence="1" type="primary">argH</name>
    <name type="ordered locus">BLi03083</name>
    <name type="ordered locus">BL00416</name>
</gene>
<accession>Q65G68</accession>
<accession>Q62RM2</accession>